<accession>P0CM74</accession>
<accession>Q55WM6</accession>
<accession>Q5KJL9</accession>
<organism>
    <name type="scientific">Cryptococcus neoformans var. neoformans serotype D (strain JEC21 / ATCC MYA-565)</name>
    <name type="common">Filobasidiella neoformans</name>
    <dbReference type="NCBI Taxonomy" id="214684"/>
    <lineage>
        <taxon>Eukaryota</taxon>
        <taxon>Fungi</taxon>
        <taxon>Dikarya</taxon>
        <taxon>Basidiomycota</taxon>
        <taxon>Agaricomycotina</taxon>
        <taxon>Tremellomycetes</taxon>
        <taxon>Tremellales</taxon>
        <taxon>Cryptococcaceae</taxon>
        <taxon>Cryptococcus</taxon>
        <taxon>Cryptococcus neoformans species complex</taxon>
    </lineage>
</organism>
<protein>
    <recommendedName>
        <fullName>Protein STU1</fullName>
    </recommendedName>
</protein>
<name>STU1_CRYNJ</name>
<gene>
    <name type="primary">STU1</name>
    <name type="ordered locus">CNC06070</name>
</gene>
<proteinExistence type="inferred from homology"/>
<evidence type="ECO:0000250" key="1"/>
<evidence type="ECO:0000256" key="2">
    <source>
        <dbReference type="SAM" id="MobiDB-lite"/>
    </source>
</evidence>
<evidence type="ECO:0000305" key="3"/>
<comment type="function">
    <text evidence="1">Microtubule binding protein that promotes the stabilization of dynamic microtubules. Required for mitotic spindle formation (By similarity).</text>
</comment>
<comment type="subunit">
    <text evidence="1">Interacts with microtubules.</text>
</comment>
<comment type="subcellular location">
    <subcellularLocation>
        <location evidence="1">Cytoplasm</location>
        <location evidence="1">Cytoskeleton</location>
    </subcellularLocation>
    <subcellularLocation>
        <location evidence="1">Nucleus</location>
    </subcellularLocation>
    <subcellularLocation>
        <location evidence="1">Cytoplasm</location>
        <location evidence="1">Cytoskeleton</location>
        <location evidence="1">Spindle</location>
    </subcellularLocation>
</comment>
<comment type="similarity">
    <text evidence="3">Belongs to the CLASP family.</text>
</comment>
<sequence length="1249" mass="136718">MPKTLTESEVEATFAKLKAADPDRKVDIIQFFGLQLEDVEELPASVIDPFLLILPPLIRSPHSLLLSSVLSSFLPYFLPLIPKHPTTHLRLALLQVLPALLEKLNDAKERIHSAAGNAIVILGELSWEAEPPIPASNLNSSGSLKAGSLSSSTATKSKPHETLPHLWERHLKDVLQGKAWRSKVEGMKVLTKMRSKEGAKMGLKAWLGVLVDLLEDGDGNVRDQARETVVELLSPPSTPPAARSEFKRLLVARNVRKTIADDIITRILSGEGSDRSTPAVMNSELGKEEGASRSGAAAPAHSQADDVDIVYVASPQDLEREFHSMLPFFEGKETEENWAPRERSIVRIRGMMKGQAHVKYQAAFIAGLKGGIVEGMSKTVLSLRTTVAQQSCYLLKELPEGLGAAFDNFVEFLLPILGKMSGFTKKLIADRSQTAVTSIITHTTVHPRIFINHISSGIQEKNVQIRAYSVNHLKTFLIVHASHAKHQIEATPGLSDTLDAAFRKALADVNPGVREVTRQAFWRYHEVWRSKAEVLMNSLDGQARKQLEKANPRTAASPMPSYASSSSTGAPSSANTKPPSKKMDLKAMLAERRRAVKEAGKQAQETNAGSPRVVSNPVFASPGVQHASITGLPRSSSAVGIARHVETSSPSPVRSPTPSSSATRIRPSPSPERIQSPIQTKIEIDSPLRSRYTSLTPDLARSPPKSPSPSLSPSLGLGESPLRQVLTYPAANGRHSVGEGKRAIPELVEVADNGAEHEVDELTLKEGQKTRDDGNTDQELPPTVQEEVDQVEQSQQFESEPRLEHPEPQQGNTFSTSTSGRVPSTPARSIATGTTASLPNSRNGNIKGEKIISSRLNPEAFQTPLNPKTSALRSSSAIRTPAWKDSPRPEAVTPQMMQKLKERRHERSWWVKRQELLEKASPLKPLTPSPSFAILPDIEALELGAPTLKNLQKIALFCSSHPVRPEPTAEQDEEEKRAFEEEKRVWTGLFDRVMNGVVDFLRPDKDKELLEQGLVVLWEIVQHQWPLVDDTQRLCHGLFRLRESSDAVVLESTNALISLLVQISDPMLLLCNLRSSLDRFLTKHPAPPSSSADNSDPMTSALSQLSLSSSKESPEKRTRNSGYLFGLTSIGMCVLRLSAPVIVSEGPKLGQIVMEAINDPSSIIRQAAHSLLLAIQCVTHDSRKTLAFVPAMSQGQKDLAVYYMAQNGVLEQIGLHKKATSEGEKGREGDRDNMTGELAGLMSRGVIRE</sequence>
<reference key="1">
    <citation type="journal article" date="2005" name="Science">
        <title>The genome of the basidiomycetous yeast and human pathogen Cryptococcus neoformans.</title>
        <authorList>
            <person name="Loftus B.J."/>
            <person name="Fung E."/>
            <person name="Roncaglia P."/>
            <person name="Rowley D."/>
            <person name="Amedeo P."/>
            <person name="Bruno D."/>
            <person name="Vamathevan J."/>
            <person name="Miranda M."/>
            <person name="Anderson I.J."/>
            <person name="Fraser J.A."/>
            <person name="Allen J.E."/>
            <person name="Bosdet I.E."/>
            <person name="Brent M.R."/>
            <person name="Chiu R."/>
            <person name="Doering T.L."/>
            <person name="Donlin M.J."/>
            <person name="D'Souza C.A."/>
            <person name="Fox D.S."/>
            <person name="Grinberg V."/>
            <person name="Fu J."/>
            <person name="Fukushima M."/>
            <person name="Haas B.J."/>
            <person name="Huang J.C."/>
            <person name="Janbon G."/>
            <person name="Jones S.J.M."/>
            <person name="Koo H.L."/>
            <person name="Krzywinski M.I."/>
            <person name="Kwon-Chung K.J."/>
            <person name="Lengeler K.B."/>
            <person name="Maiti R."/>
            <person name="Marra M.A."/>
            <person name="Marra R.E."/>
            <person name="Mathewson C.A."/>
            <person name="Mitchell T.G."/>
            <person name="Pertea M."/>
            <person name="Riggs F.R."/>
            <person name="Salzberg S.L."/>
            <person name="Schein J.E."/>
            <person name="Shvartsbeyn A."/>
            <person name="Shin H."/>
            <person name="Shumway M."/>
            <person name="Specht C.A."/>
            <person name="Suh B.B."/>
            <person name="Tenney A."/>
            <person name="Utterback T.R."/>
            <person name="Wickes B.L."/>
            <person name="Wortman J.R."/>
            <person name="Wye N.H."/>
            <person name="Kronstad J.W."/>
            <person name="Lodge J.K."/>
            <person name="Heitman J."/>
            <person name="Davis R.W."/>
            <person name="Fraser C.M."/>
            <person name="Hyman R.W."/>
        </authorList>
    </citation>
    <scope>NUCLEOTIDE SEQUENCE [LARGE SCALE GENOMIC DNA]</scope>
    <source>
        <strain>JEC21 / ATCC MYA-565</strain>
    </source>
</reference>
<dbReference type="EMBL" id="AE017343">
    <property type="protein sequence ID" value="AAW42562.2"/>
    <property type="molecule type" value="Genomic_DNA"/>
</dbReference>
<dbReference type="RefSeq" id="XP_569869.1">
    <property type="nucleotide sequence ID" value="XM_569869.1"/>
</dbReference>
<dbReference type="STRING" id="214684.P0CM74"/>
<dbReference type="PaxDb" id="214684-P0CM74"/>
<dbReference type="eggNOG" id="ENOG502QT5T">
    <property type="taxonomic scope" value="Eukaryota"/>
</dbReference>
<dbReference type="InParanoid" id="P0CM74"/>
<dbReference type="Proteomes" id="UP000002149">
    <property type="component" value="Chromosome 3"/>
</dbReference>
<dbReference type="GO" id="GO:0005881">
    <property type="term" value="C:cytoplasmic microtubule"/>
    <property type="evidence" value="ECO:0000318"/>
    <property type="project" value="GO_Central"/>
</dbReference>
<dbReference type="GO" id="GO:0005815">
    <property type="term" value="C:microtubule organizing center"/>
    <property type="evidence" value="ECO:0000318"/>
    <property type="project" value="GO_Central"/>
</dbReference>
<dbReference type="GO" id="GO:0072686">
    <property type="term" value="C:mitotic spindle"/>
    <property type="evidence" value="ECO:0000318"/>
    <property type="project" value="GO_Central"/>
</dbReference>
<dbReference type="GO" id="GO:1990023">
    <property type="term" value="C:mitotic spindle midzone"/>
    <property type="evidence" value="ECO:0000318"/>
    <property type="project" value="GO_Central"/>
</dbReference>
<dbReference type="GO" id="GO:0005634">
    <property type="term" value="C:nucleus"/>
    <property type="evidence" value="ECO:0007669"/>
    <property type="project" value="UniProtKB-SubCell"/>
</dbReference>
<dbReference type="GO" id="GO:0005876">
    <property type="term" value="C:spindle microtubule"/>
    <property type="evidence" value="ECO:0000318"/>
    <property type="project" value="GO_Central"/>
</dbReference>
<dbReference type="GO" id="GO:0008017">
    <property type="term" value="F:microtubule binding"/>
    <property type="evidence" value="ECO:0000318"/>
    <property type="project" value="GO_Central"/>
</dbReference>
<dbReference type="GO" id="GO:0051301">
    <property type="term" value="P:cell division"/>
    <property type="evidence" value="ECO:0007669"/>
    <property type="project" value="UniProtKB-KW"/>
</dbReference>
<dbReference type="GO" id="GO:0090307">
    <property type="term" value="P:mitotic spindle assembly"/>
    <property type="evidence" value="ECO:0000318"/>
    <property type="project" value="GO_Central"/>
</dbReference>
<dbReference type="Gene3D" id="1.25.10.10">
    <property type="entry name" value="Leucine-rich Repeat Variant"/>
    <property type="match status" value="2"/>
</dbReference>
<dbReference type="InterPro" id="IPR011989">
    <property type="entry name" value="ARM-like"/>
</dbReference>
<dbReference type="InterPro" id="IPR016024">
    <property type="entry name" value="ARM-type_fold"/>
</dbReference>
<dbReference type="InterPro" id="IPR024395">
    <property type="entry name" value="CLASP_N_dom"/>
</dbReference>
<dbReference type="PANTHER" id="PTHR21567">
    <property type="entry name" value="CLASP"/>
    <property type="match status" value="1"/>
</dbReference>
<dbReference type="PANTHER" id="PTHR21567:SF9">
    <property type="entry name" value="CLIP-ASSOCIATING PROTEIN"/>
    <property type="match status" value="1"/>
</dbReference>
<dbReference type="Pfam" id="PF12348">
    <property type="entry name" value="CLASP_N"/>
    <property type="match status" value="1"/>
</dbReference>
<dbReference type="SUPFAM" id="SSF48371">
    <property type="entry name" value="ARM repeat"/>
    <property type="match status" value="1"/>
</dbReference>
<feature type="chain" id="PRO_0000272287" description="Protein STU1">
    <location>
        <begin position="1"/>
        <end position="1249"/>
    </location>
</feature>
<feature type="region of interest" description="Disordered" evidence="2">
    <location>
        <begin position="138"/>
        <end position="161"/>
    </location>
</feature>
<feature type="region of interest" description="Disordered" evidence="2">
    <location>
        <begin position="545"/>
        <end position="619"/>
    </location>
</feature>
<feature type="region of interest" description="Disordered" evidence="2">
    <location>
        <begin position="644"/>
        <end position="718"/>
    </location>
</feature>
<feature type="region of interest" description="Disordered" evidence="2">
    <location>
        <begin position="755"/>
        <end position="846"/>
    </location>
</feature>
<feature type="region of interest" description="Disordered" evidence="2">
    <location>
        <begin position="860"/>
        <end position="891"/>
    </location>
</feature>
<feature type="region of interest" description="Disordered" evidence="2">
    <location>
        <begin position="1084"/>
        <end position="1118"/>
    </location>
</feature>
<feature type="compositionally biased region" description="Low complexity" evidence="2">
    <location>
        <begin position="138"/>
        <end position="156"/>
    </location>
</feature>
<feature type="compositionally biased region" description="Low complexity" evidence="2">
    <location>
        <begin position="555"/>
        <end position="574"/>
    </location>
</feature>
<feature type="compositionally biased region" description="Basic and acidic residues" evidence="2">
    <location>
        <begin position="581"/>
        <end position="600"/>
    </location>
</feature>
<feature type="compositionally biased region" description="Low complexity" evidence="2">
    <location>
        <begin position="647"/>
        <end position="667"/>
    </location>
</feature>
<feature type="compositionally biased region" description="Low complexity" evidence="2">
    <location>
        <begin position="708"/>
        <end position="718"/>
    </location>
</feature>
<feature type="compositionally biased region" description="Basic and acidic residues" evidence="2">
    <location>
        <begin position="755"/>
        <end position="774"/>
    </location>
</feature>
<feature type="compositionally biased region" description="Polar residues" evidence="2">
    <location>
        <begin position="809"/>
        <end position="822"/>
    </location>
</feature>
<feature type="compositionally biased region" description="Polar residues" evidence="2">
    <location>
        <begin position="831"/>
        <end position="844"/>
    </location>
</feature>
<feature type="compositionally biased region" description="Polar residues" evidence="2">
    <location>
        <begin position="863"/>
        <end position="878"/>
    </location>
</feature>
<feature type="compositionally biased region" description="Low complexity" evidence="2">
    <location>
        <begin position="1089"/>
        <end position="1111"/>
    </location>
</feature>
<keyword id="KW-0131">Cell cycle</keyword>
<keyword id="KW-0132">Cell division</keyword>
<keyword id="KW-0963">Cytoplasm</keyword>
<keyword id="KW-0206">Cytoskeleton</keyword>
<keyword id="KW-0493">Microtubule</keyword>
<keyword id="KW-0498">Mitosis</keyword>
<keyword id="KW-0539">Nucleus</keyword>
<keyword id="KW-1185">Reference proteome</keyword>